<geneLocation type="plasmid">
    <name>sym pNGR234a</name>
</geneLocation>
<gene>
    <name type="ordered locus">NGR_a01790</name>
    <name type="ORF">y4rH</name>
</gene>
<name>Y4RH_SINFN</name>
<organism>
    <name type="scientific">Sinorhizobium fredii (strain NBRC 101917 / NGR234)</name>
    <dbReference type="NCBI Taxonomy" id="394"/>
    <lineage>
        <taxon>Bacteria</taxon>
        <taxon>Pseudomonadati</taxon>
        <taxon>Pseudomonadota</taxon>
        <taxon>Alphaproteobacteria</taxon>
        <taxon>Hyphomicrobiales</taxon>
        <taxon>Rhizobiaceae</taxon>
        <taxon>Sinorhizobium/Ensifer group</taxon>
        <taxon>Sinorhizobium</taxon>
    </lineage>
</organism>
<proteinExistence type="predicted"/>
<accession>P55641</accession>
<keyword id="KW-0067">ATP-binding</keyword>
<keyword id="KW-0436">Ligase</keyword>
<keyword id="KW-0547">Nucleotide-binding</keyword>
<keyword id="KW-0614">Plasmid</keyword>
<keyword id="KW-1185">Reference proteome</keyword>
<protein>
    <recommendedName>
        <fullName>Uncharacterized protein y4rH</fullName>
    </recommendedName>
</protein>
<evidence type="ECO:0000250" key="1"/>
<evidence type="ECO:0000255" key="2">
    <source>
        <dbReference type="PROSITE-ProRule" id="PRU00409"/>
    </source>
</evidence>
<dbReference type="EMBL" id="U00090">
    <property type="protein sequence ID" value="AAB91833.1"/>
    <property type="molecule type" value="Genomic_DNA"/>
</dbReference>
<dbReference type="RefSeq" id="NP_444046.1">
    <property type="nucleotide sequence ID" value="NC_000914.2"/>
</dbReference>
<dbReference type="RefSeq" id="WP_010875213.1">
    <property type="nucleotide sequence ID" value="NC_000914.2"/>
</dbReference>
<dbReference type="SMR" id="P55641"/>
<dbReference type="KEGG" id="rhi:NGR_a01790"/>
<dbReference type="PATRIC" id="fig|394.7.peg.177"/>
<dbReference type="eggNOG" id="COG1181">
    <property type="taxonomic scope" value="Bacteria"/>
</dbReference>
<dbReference type="HOGENOM" id="CLU_029016_6_2_5"/>
<dbReference type="OrthoDB" id="9765608at2"/>
<dbReference type="Proteomes" id="UP000001054">
    <property type="component" value="Plasmid pNGR234a"/>
</dbReference>
<dbReference type="GO" id="GO:0005524">
    <property type="term" value="F:ATP binding"/>
    <property type="evidence" value="ECO:0007669"/>
    <property type="project" value="UniProtKB-KW"/>
</dbReference>
<dbReference type="GO" id="GO:0016874">
    <property type="term" value="F:ligase activity"/>
    <property type="evidence" value="ECO:0007669"/>
    <property type="project" value="UniProtKB-KW"/>
</dbReference>
<dbReference type="GO" id="GO:0046872">
    <property type="term" value="F:metal ion binding"/>
    <property type="evidence" value="ECO:0007669"/>
    <property type="project" value="InterPro"/>
</dbReference>
<dbReference type="Gene3D" id="3.40.50.20">
    <property type="match status" value="1"/>
</dbReference>
<dbReference type="Gene3D" id="3.30.1490.20">
    <property type="entry name" value="ATP-grasp fold, A domain"/>
    <property type="match status" value="1"/>
</dbReference>
<dbReference type="Gene3D" id="3.30.470.20">
    <property type="entry name" value="ATP-grasp fold, B domain"/>
    <property type="match status" value="1"/>
</dbReference>
<dbReference type="InterPro" id="IPR052032">
    <property type="entry name" value="ATP-dep_AA_Ligase"/>
</dbReference>
<dbReference type="InterPro" id="IPR011761">
    <property type="entry name" value="ATP-grasp"/>
</dbReference>
<dbReference type="InterPro" id="IPR013815">
    <property type="entry name" value="ATP_grasp_subdomain_1"/>
</dbReference>
<dbReference type="InterPro" id="IPR005479">
    <property type="entry name" value="CbamoylP_synth_lsu-like_ATP-bd"/>
</dbReference>
<dbReference type="InterPro" id="IPR040570">
    <property type="entry name" value="LAL_C2"/>
</dbReference>
<dbReference type="PANTHER" id="PTHR43585:SF2">
    <property type="entry name" value="ATP-GRASP ENZYME FSQD"/>
    <property type="match status" value="1"/>
</dbReference>
<dbReference type="PANTHER" id="PTHR43585">
    <property type="entry name" value="FUMIPYRROLE BIOSYNTHESIS PROTEIN C"/>
    <property type="match status" value="1"/>
</dbReference>
<dbReference type="Pfam" id="PF02786">
    <property type="entry name" value="CPSase_L_D2"/>
    <property type="match status" value="1"/>
</dbReference>
<dbReference type="Pfam" id="PF18603">
    <property type="entry name" value="LAL_C2"/>
    <property type="match status" value="1"/>
</dbReference>
<dbReference type="SMART" id="SM01209">
    <property type="entry name" value="GARS_A"/>
    <property type="match status" value="1"/>
</dbReference>
<dbReference type="SUPFAM" id="SSF56059">
    <property type="entry name" value="Glutathione synthetase ATP-binding domain-like"/>
    <property type="match status" value="1"/>
</dbReference>
<dbReference type="PROSITE" id="PS50975">
    <property type="entry name" value="ATP_GRASP"/>
    <property type="match status" value="1"/>
</dbReference>
<dbReference type="PROSITE" id="PS00867">
    <property type="entry name" value="CPSASE_2"/>
    <property type="match status" value="1"/>
</dbReference>
<sequence>MSGKIMFGTARSFTLALYDVRVRRLCMRNYSREWAPSSAAETTDADRLGHPQNVTAEADKMRKALILIENTRTNGRSYVEAVRRLRLHPIILAADPALYDYVAAERIEVARVDTTNLDALIGEYSRLGKSFDIAGVTSAAESFYATVGKICRNFNLPGPDPESIEQCCNKAAQRQVLAAAGVPVPGYRSATTAAEVQCVAAEIGLPAVLKPAVGSGSRGVRLCRDARELAEHTDYLLGGKHMWRSSPEVLVEQFVDGPHYIAEIMGDEVIGIGITEYGPPPHFVFRQLTFPAPLTDEQYERAVDVVQRCLRALGLGWGPTNIEFRWTEVGPVVIEVNPRLAGNPDPQLVQLAFDVDLIGEHIKLAIGEQCNLSKRQSRTATARSLIADRDGTLDYIDGIDRAAAIPGVADVKLYVRPGTPIVRNGDYCDRIGYVVAVAPSRSSADTIIQRAVESIDWSISPFSDLHDQEQYTPLYFPD</sequence>
<reference key="1">
    <citation type="journal article" date="1997" name="Nature">
        <title>Molecular basis of symbiosis between Rhizobium and legumes.</title>
        <authorList>
            <person name="Freiberg C.A."/>
            <person name="Fellay R."/>
            <person name="Bairoch A."/>
            <person name="Broughton W.J."/>
            <person name="Rosenthal A."/>
            <person name="Perret X."/>
        </authorList>
    </citation>
    <scope>NUCLEOTIDE SEQUENCE [LARGE SCALE GENOMIC DNA]</scope>
    <source>
        <strain>NBRC 101917 / NGR234</strain>
    </source>
</reference>
<reference key="2">
    <citation type="journal article" date="2009" name="Appl. Environ. Microbiol.">
        <title>Rhizobium sp. strain NGR234 possesses a remarkable number of secretion systems.</title>
        <authorList>
            <person name="Schmeisser C."/>
            <person name="Liesegang H."/>
            <person name="Krysciak D."/>
            <person name="Bakkou N."/>
            <person name="Le Quere A."/>
            <person name="Wollherr A."/>
            <person name="Heinemeyer I."/>
            <person name="Morgenstern B."/>
            <person name="Pommerening-Roeser A."/>
            <person name="Flores M."/>
            <person name="Palacios R."/>
            <person name="Brenner S."/>
            <person name="Gottschalk G."/>
            <person name="Schmitz R.A."/>
            <person name="Broughton W.J."/>
            <person name="Perret X."/>
            <person name="Strittmatter A.W."/>
            <person name="Streit W.R."/>
        </authorList>
    </citation>
    <scope>NUCLEOTIDE SEQUENCE [LARGE SCALE GENOMIC DNA]</scope>
    <source>
        <strain>NBRC 101917 / NGR234</strain>
    </source>
</reference>
<feature type="chain" id="PRO_0000146799" description="Uncharacterized protein y4rH">
    <location>
        <begin position="1"/>
        <end position="478"/>
    </location>
</feature>
<feature type="domain" description="ATP-grasp" evidence="2">
    <location>
        <begin position="174"/>
        <end position="366"/>
    </location>
</feature>
<feature type="active site" evidence="1">
    <location>
        <position position="339"/>
    </location>
</feature>
<feature type="binding site" evidence="2">
    <location>
        <begin position="214"/>
        <end position="219"/>
    </location>
    <ligand>
        <name>ATP</name>
        <dbReference type="ChEBI" id="CHEBI:30616"/>
    </ligand>
</feature>